<name>RL14_PEDPA</name>
<sequence>MIQQESRLKVADNSGARELLVIKVLGGSRVKFGYIGDIIVATVKQATPGGVVKKGDVVKAVVVRTKQGAHRADGSYIKFDENAAVLIKDDKSPQGTRIFGPVARELRDKDYMKIVSLAPEVL</sequence>
<feature type="chain" id="PRO_1000055661" description="Large ribosomal subunit protein uL14">
    <location>
        <begin position="1"/>
        <end position="122"/>
    </location>
</feature>
<comment type="function">
    <text evidence="1">Binds to 23S rRNA. Forms part of two intersubunit bridges in the 70S ribosome.</text>
</comment>
<comment type="subunit">
    <text evidence="1">Part of the 50S ribosomal subunit. Forms a cluster with proteins L3 and L19. In the 70S ribosome, L14 and L19 interact and together make contacts with the 16S rRNA in bridges B5 and B8.</text>
</comment>
<comment type="similarity">
    <text evidence="1">Belongs to the universal ribosomal protein uL14 family.</text>
</comment>
<proteinExistence type="inferred from homology"/>
<evidence type="ECO:0000255" key="1">
    <source>
        <dbReference type="HAMAP-Rule" id="MF_01367"/>
    </source>
</evidence>
<evidence type="ECO:0000305" key="2"/>
<organism>
    <name type="scientific">Pediococcus pentosaceus (strain ATCC 25745 / CCUG 21536 / LMG 10740 / 183-1w)</name>
    <dbReference type="NCBI Taxonomy" id="278197"/>
    <lineage>
        <taxon>Bacteria</taxon>
        <taxon>Bacillati</taxon>
        <taxon>Bacillota</taxon>
        <taxon>Bacilli</taxon>
        <taxon>Lactobacillales</taxon>
        <taxon>Lactobacillaceae</taxon>
        <taxon>Pediococcus</taxon>
    </lineage>
</organism>
<protein>
    <recommendedName>
        <fullName evidence="1">Large ribosomal subunit protein uL14</fullName>
    </recommendedName>
    <alternativeName>
        <fullName evidence="2">50S ribosomal protein L14</fullName>
    </alternativeName>
</protein>
<gene>
    <name evidence="1" type="primary">rplN</name>
    <name type="ordered locus">PEPE_1408</name>
</gene>
<keyword id="KW-0687">Ribonucleoprotein</keyword>
<keyword id="KW-0689">Ribosomal protein</keyword>
<keyword id="KW-0694">RNA-binding</keyword>
<keyword id="KW-0699">rRNA-binding</keyword>
<accession>Q03EC6</accession>
<reference key="1">
    <citation type="journal article" date="2006" name="Proc. Natl. Acad. Sci. U.S.A.">
        <title>Comparative genomics of the lactic acid bacteria.</title>
        <authorList>
            <person name="Makarova K.S."/>
            <person name="Slesarev A."/>
            <person name="Wolf Y.I."/>
            <person name="Sorokin A."/>
            <person name="Mirkin B."/>
            <person name="Koonin E.V."/>
            <person name="Pavlov A."/>
            <person name="Pavlova N."/>
            <person name="Karamychev V."/>
            <person name="Polouchine N."/>
            <person name="Shakhova V."/>
            <person name="Grigoriev I."/>
            <person name="Lou Y."/>
            <person name="Rohksar D."/>
            <person name="Lucas S."/>
            <person name="Huang K."/>
            <person name="Goodstein D.M."/>
            <person name="Hawkins T."/>
            <person name="Plengvidhya V."/>
            <person name="Welker D."/>
            <person name="Hughes J."/>
            <person name="Goh Y."/>
            <person name="Benson A."/>
            <person name="Baldwin K."/>
            <person name="Lee J.-H."/>
            <person name="Diaz-Muniz I."/>
            <person name="Dosti B."/>
            <person name="Smeianov V."/>
            <person name="Wechter W."/>
            <person name="Barabote R."/>
            <person name="Lorca G."/>
            <person name="Altermann E."/>
            <person name="Barrangou R."/>
            <person name="Ganesan B."/>
            <person name="Xie Y."/>
            <person name="Rawsthorne H."/>
            <person name="Tamir D."/>
            <person name="Parker C."/>
            <person name="Breidt F."/>
            <person name="Broadbent J.R."/>
            <person name="Hutkins R."/>
            <person name="O'Sullivan D."/>
            <person name="Steele J."/>
            <person name="Unlu G."/>
            <person name="Saier M.H. Jr."/>
            <person name="Klaenhammer T."/>
            <person name="Richardson P."/>
            <person name="Kozyavkin S."/>
            <person name="Weimer B.C."/>
            <person name="Mills D.A."/>
        </authorList>
    </citation>
    <scope>NUCLEOTIDE SEQUENCE [LARGE SCALE GENOMIC DNA]</scope>
    <source>
        <strain>ATCC 25745 / CCUG 21536 / LMG 10740 / 183-1w</strain>
    </source>
</reference>
<dbReference type="EMBL" id="CP000422">
    <property type="protein sequence ID" value="ABJ68446.1"/>
    <property type="molecule type" value="Genomic_DNA"/>
</dbReference>
<dbReference type="RefSeq" id="WP_002833337.1">
    <property type="nucleotide sequence ID" value="NC_008525.1"/>
</dbReference>
<dbReference type="SMR" id="Q03EC6"/>
<dbReference type="STRING" id="278197.PEPE_1408"/>
<dbReference type="GeneID" id="33062845"/>
<dbReference type="KEGG" id="ppe:PEPE_1408"/>
<dbReference type="eggNOG" id="COG0093">
    <property type="taxonomic scope" value="Bacteria"/>
</dbReference>
<dbReference type="HOGENOM" id="CLU_095071_2_1_9"/>
<dbReference type="OrthoDB" id="9806379at2"/>
<dbReference type="Proteomes" id="UP000000773">
    <property type="component" value="Chromosome"/>
</dbReference>
<dbReference type="GO" id="GO:0022625">
    <property type="term" value="C:cytosolic large ribosomal subunit"/>
    <property type="evidence" value="ECO:0007669"/>
    <property type="project" value="TreeGrafter"/>
</dbReference>
<dbReference type="GO" id="GO:0070180">
    <property type="term" value="F:large ribosomal subunit rRNA binding"/>
    <property type="evidence" value="ECO:0007669"/>
    <property type="project" value="TreeGrafter"/>
</dbReference>
<dbReference type="GO" id="GO:0003735">
    <property type="term" value="F:structural constituent of ribosome"/>
    <property type="evidence" value="ECO:0007669"/>
    <property type="project" value="InterPro"/>
</dbReference>
<dbReference type="GO" id="GO:0006412">
    <property type="term" value="P:translation"/>
    <property type="evidence" value="ECO:0007669"/>
    <property type="project" value="UniProtKB-UniRule"/>
</dbReference>
<dbReference type="CDD" id="cd00337">
    <property type="entry name" value="Ribosomal_uL14"/>
    <property type="match status" value="1"/>
</dbReference>
<dbReference type="FunFam" id="2.40.150.20:FF:000001">
    <property type="entry name" value="50S ribosomal protein L14"/>
    <property type="match status" value="1"/>
</dbReference>
<dbReference type="Gene3D" id="2.40.150.20">
    <property type="entry name" value="Ribosomal protein L14"/>
    <property type="match status" value="1"/>
</dbReference>
<dbReference type="HAMAP" id="MF_01367">
    <property type="entry name" value="Ribosomal_uL14"/>
    <property type="match status" value="1"/>
</dbReference>
<dbReference type="InterPro" id="IPR000218">
    <property type="entry name" value="Ribosomal_uL14"/>
</dbReference>
<dbReference type="InterPro" id="IPR005745">
    <property type="entry name" value="Ribosomal_uL14_bac-type"/>
</dbReference>
<dbReference type="InterPro" id="IPR019972">
    <property type="entry name" value="Ribosomal_uL14_CS"/>
</dbReference>
<dbReference type="InterPro" id="IPR036853">
    <property type="entry name" value="Ribosomal_uL14_sf"/>
</dbReference>
<dbReference type="NCBIfam" id="TIGR01067">
    <property type="entry name" value="rplN_bact"/>
    <property type="match status" value="1"/>
</dbReference>
<dbReference type="PANTHER" id="PTHR11761">
    <property type="entry name" value="50S/60S RIBOSOMAL PROTEIN L14/L23"/>
    <property type="match status" value="1"/>
</dbReference>
<dbReference type="PANTHER" id="PTHR11761:SF3">
    <property type="entry name" value="LARGE RIBOSOMAL SUBUNIT PROTEIN UL14M"/>
    <property type="match status" value="1"/>
</dbReference>
<dbReference type="Pfam" id="PF00238">
    <property type="entry name" value="Ribosomal_L14"/>
    <property type="match status" value="1"/>
</dbReference>
<dbReference type="SMART" id="SM01374">
    <property type="entry name" value="Ribosomal_L14"/>
    <property type="match status" value="1"/>
</dbReference>
<dbReference type="SUPFAM" id="SSF50193">
    <property type="entry name" value="Ribosomal protein L14"/>
    <property type="match status" value="1"/>
</dbReference>
<dbReference type="PROSITE" id="PS00049">
    <property type="entry name" value="RIBOSOMAL_L14"/>
    <property type="match status" value="1"/>
</dbReference>